<name>CYSE_BUCAP</name>
<organism>
    <name type="scientific">Buchnera aphidicola subsp. Schizaphis graminum (strain Sg)</name>
    <dbReference type="NCBI Taxonomy" id="198804"/>
    <lineage>
        <taxon>Bacteria</taxon>
        <taxon>Pseudomonadati</taxon>
        <taxon>Pseudomonadota</taxon>
        <taxon>Gammaproteobacteria</taxon>
        <taxon>Enterobacterales</taxon>
        <taxon>Erwiniaceae</taxon>
        <taxon>Buchnera</taxon>
    </lineage>
</organism>
<comment type="catalytic activity">
    <reaction>
        <text>L-serine + acetyl-CoA = O-acetyl-L-serine + CoA</text>
        <dbReference type="Rhea" id="RHEA:24560"/>
        <dbReference type="ChEBI" id="CHEBI:33384"/>
        <dbReference type="ChEBI" id="CHEBI:57287"/>
        <dbReference type="ChEBI" id="CHEBI:57288"/>
        <dbReference type="ChEBI" id="CHEBI:58340"/>
        <dbReference type="EC" id="2.3.1.30"/>
    </reaction>
</comment>
<comment type="pathway">
    <text>Amino-acid biosynthesis; L-cysteine biosynthesis; L-cysteine from L-serine: step 1/2.</text>
</comment>
<comment type="subcellular location">
    <subcellularLocation>
        <location evidence="1">Cytoplasm</location>
    </subcellularLocation>
</comment>
<comment type="similarity">
    <text evidence="2">Belongs to the transferase hexapeptide repeat family.</text>
</comment>
<reference key="1">
    <citation type="journal article" date="1992" name="Gene">
        <title>Sequence analysis of a DNA fragment from Buchnera aphidicola (an endosymbiont of aphids) containing genes homologous to dnaG, rpoD, cysE, and secB.</title>
        <authorList>
            <person name="Lai C.-Y."/>
            <person name="Baumann P."/>
        </authorList>
    </citation>
    <scope>NUCLEOTIDE SEQUENCE [GENOMIC DNA]</scope>
</reference>
<reference key="2">
    <citation type="journal article" date="2002" name="Science">
        <title>50 million years of genomic stasis in endosymbiotic bacteria.</title>
        <authorList>
            <person name="Tamas I."/>
            <person name="Klasson L."/>
            <person name="Canbaeck B."/>
            <person name="Naeslund A.K."/>
            <person name="Eriksson A.-S."/>
            <person name="Wernegreen J.J."/>
            <person name="Sandstroem J.P."/>
            <person name="Moran N.A."/>
            <person name="Andersson S.G.E."/>
        </authorList>
    </citation>
    <scope>NUCLEOTIDE SEQUENCE [LARGE SCALE GENOMIC DNA]</scope>
    <source>
        <strain>Sg</strain>
    </source>
</reference>
<keyword id="KW-0012">Acyltransferase</keyword>
<keyword id="KW-0028">Amino-acid biosynthesis</keyword>
<keyword id="KW-0198">Cysteine biosynthesis</keyword>
<keyword id="KW-0963">Cytoplasm</keyword>
<keyword id="KW-0677">Repeat</keyword>
<keyword id="KW-0808">Transferase</keyword>
<protein>
    <recommendedName>
        <fullName>Serine acetyltransferase</fullName>
        <shortName>SAT</shortName>
        <ecNumber>2.3.1.30</ecNumber>
    </recommendedName>
</protein>
<feature type="chain" id="PRO_0000068667" description="Serine acetyltransferase">
    <location>
        <begin position="1"/>
        <end position="261"/>
    </location>
</feature>
<sequence length="261" mass="28914">MCSLEELELWNMIKHKAQKILKKEPILSNFYQKSILNHKKLSHSLSCILSDKLSTSMISEKDIYNIFNKIYANNISIINSVVKDIKAASQRDPVVKHYLTPLLYLKGFHALEAYRLSHYLWNIKRYELSAYLQSRISTVFSVDIHPAASIGSGIMLDHATGIVIGEGVIIENDVSIFHSVTLGGTGSNTGKNRHPIIRKNVTIGAGAKILGNIEVGQGVKVGAGSIVLKNIPPFVTVVGVPAKIIKKIKNSNKNLFQKEKK</sequence>
<dbReference type="EC" id="2.3.1.30"/>
<dbReference type="EMBL" id="M90644">
    <property type="protein sequence ID" value="AAA73232.1"/>
    <property type="molecule type" value="Genomic_DNA"/>
</dbReference>
<dbReference type="EMBL" id="AE013218">
    <property type="protein sequence ID" value="AAM67622.1"/>
    <property type="molecule type" value="Genomic_DNA"/>
</dbReference>
<dbReference type="PIR" id="JC1293">
    <property type="entry name" value="JC1293"/>
</dbReference>
<dbReference type="SMR" id="P32003"/>
<dbReference type="STRING" id="198804.BUsg_051"/>
<dbReference type="KEGG" id="bas:BUsg_051"/>
<dbReference type="eggNOG" id="COG1045">
    <property type="taxonomic scope" value="Bacteria"/>
</dbReference>
<dbReference type="HOGENOM" id="CLU_051638_0_1_6"/>
<dbReference type="UniPathway" id="UPA00136">
    <property type="reaction ID" value="UER00199"/>
</dbReference>
<dbReference type="Proteomes" id="UP000000416">
    <property type="component" value="Chromosome"/>
</dbReference>
<dbReference type="GO" id="GO:0005737">
    <property type="term" value="C:cytoplasm"/>
    <property type="evidence" value="ECO:0007669"/>
    <property type="project" value="UniProtKB-SubCell"/>
</dbReference>
<dbReference type="GO" id="GO:0009001">
    <property type="term" value="F:serine O-acetyltransferase activity"/>
    <property type="evidence" value="ECO:0007669"/>
    <property type="project" value="UniProtKB-EC"/>
</dbReference>
<dbReference type="GO" id="GO:0006535">
    <property type="term" value="P:cysteine biosynthetic process from serine"/>
    <property type="evidence" value="ECO:0007669"/>
    <property type="project" value="InterPro"/>
</dbReference>
<dbReference type="CDD" id="cd03354">
    <property type="entry name" value="LbH_SAT"/>
    <property type="match status" value="1"/>
</dbReference>
<dbReference type="FunFam" id="2.160.10.10:FF:000002">
    <property type="entry name" value="Serine acetyltransferase"/>
    <property type="match status" value="1"/>
</dbReference>
<dbReference type="Gene3D" id="2.160.10.10">
    <property type="entry name" value="Hexapeptide repeat proteins"/>
    <property type="match status" value="1"/>
</dbReference>
<dbReference type="Gene3D" id="1.10.3130.10">
    <property type="entry name" value="serine acetyltransferase, domain 1"/>
    <property type="match status" value="1"/>
</dbReference>
<dbReference type="InterPro" id="IPR001451">
    <property type="entry name" value="Hexapep"/>
</dbReference>
<dbReference type="InterPro" id="IPR018357">
    <property type="entry name" value="Hexapep_transf_CS"/>
</dbReference>
<dbReference type="InterPro" id="IPR045304">
    <property type="entry name" value="LbH_SAT"/>
</dbReference>
<dbReference type="InterPro" id="IPR010493">
    <property type="entry name" value="Ser_AcTrfase_N"/>
</dbReference>
<dbReference type="InterPro" id="IPR042122">
    <property type="entry name" value="Ser_AcTrfase_N_sf"/>
</dbReference>
<dbReference type="InterPro" id="IPR005881">
    <property type="entry name" value="Ser_O-AcTrfase"/>
</dbReference>
<dbReference type="InterPro" id="IPR053376">
    <property type="entry name" value="Serine_acetyltransferase"/>
</dbReference>
<dbReference type="InterPro" id="IPR011004">
    <property type="entry name" value="Trimer_LpxA-like_sf"/>
</dbReference>
<dbReference type="NCBIfam" id="TIGR01172">
    <property type="entry name" value="cysE"/>
    <property type="match status" value="1"/>
</dbReference>
<dbReference type="NCBIfam" id="NF041874">
    <property type="entry name" value="EPS_EpsC"/>
    <property type="match status" value="1"/>
</dbReference>
<dbReference type="PANTHER" id="PTHR42811">
    <property type="entry name" value="SERINE ACETYLTRANSFERASE"/>
    <property type="match status" value="1"/>
</dbReference>
<dbReference type="Pfam" id="PF00132">
    <property type="entry name" value="Hexapep"/>
    <property type="match status" value="1"/>
</dbReference>
<dbReference type="Pfam" id="PF06426">
    <property type="entry name" value="SATase_N"/>
    <property type="match status" value="1"/>
</dbReference>
<dbReference type="SMART" id="SM00971">
    <property type="entry name" value="SATase_N"/>
    <property type="match status" value="1"/>
</dbReference>
<dbReference type="SUPFAM" id="SSF51161">
    <property type="entry name" value="Trimeric LpxA-like enzymes"/>
    <property type="match status" value="1"/>
</dbReference>
<dbReference type="PROSITE" id="PS00101">
    <property type="entry name" value="HEXAPEP_TRANSFERASES"/>
    <property type="match status" value="1"/>
</dbReference>
<evidence type="ECO:0000250" key="1"/>
<evidence type="ECO:0000305" key="2"/>
<gene>
    <name type="primary">cysE</name>
    <name type="ordered locus">BUsg_051</name>
</gene>
<accession>P32003</accession>
<proteinExistence type="inferred from homology"/>